<feature type="chain" id="PRO_0000117944" description="NADH-ubiquinone oxidoreductase chain 4">
    <location>
        <begin position="1" status="less than"/>
        <end position="231" status="greater than"/>
    </location>
</feature>
<feature type="transmembrane region" description="Helical" evidence="2">
    <location>
        <begin position="1"/>
        <end position="21"/>
    </location>
</feature>
<feature type="transmembrane region" description="Helical" evidence="2">
    <location>
        <begin position="34"/>
        <end position="54"/>
    </location>
</feature>
<feature type="transmembrane region" description="Helical" evidence="2">
    <location>
        <begin position="61"/>
        <end position="80"/>
    </location>
</feature>
<feature type="transmembrane region" description="Helical" evidence="2">
    <location>
        <begin position="84"/>
        <end position="106"/>
    </location>
</feature>
<feature type="transmembrane region" description="Helical" evidence="2">
    <location>
        <begin position="118"/>
        <end position="138"/>
    </location>
</feature>
<feature type="transmembrane region" description="Helical" evidence="2">
    <location>
        <begin position="156"/>
        <end position="176"/>
    </location>
</feature>
<feature type="transmembrane region" description="Helical" evidence="2">
    <location>
        <begin position="211"/>
        <end position="231"/>
    </location>
</feature>
<feature type="non-terminal residue">
    <location>
        <position position="1"/>
    </location>
</feature>
<feature type="non-terminal residue">
    <location>
        <position position="231"/>
    </location>
</feature>
<gene>
    <name type="primary">MT-ND4</name>
    <name type="synonym">MTND4</name>
    <name type="synonym">NADH4</name>
    <name type="synonym">ND4</name>
</gene>
<organism>
    <name type="scientific">Hypnale hypnale</name>
    <name type="common">Merrem's hump-nosed viper</name>
    <dbReference type="NCBI Taxonomy" id="44720"/>
    <lineage>
        <taxon>Eukaryota</taxon>
        <taxon>Metazoa</taxon>
        <taxon>Chordata</taxon>
        <taxon>Craniata</taxon>
        <taxon>Vertebrata</taxon>
        <taxon>Euteleostomi</taxon>
        <taxon>Lepidosauria</taxon>
        <taxon>Squamata</taxon>
        <taxon>Bifurcata</taxon>
        <taxon>Unidentata</taxon>
        <taxon>Episquamata</taxon>
        <taxon>Toxicofera</taxon>
        <taxon>Serpentes</taxon>
        <taxon>Colubroidea</taxon>
        <taxon>Viperidae</taxon>
        <taxon>Crotalinae</taxon>
        <taxon>Hypnale</taxon>
    </lineage>
</organism>
<sequence>PIAGSMVLAAILLKLGGYGIIRMVQILPTTKTDLFIPFIVLALWGATLANLTCLQQTDLKSLIAYSSISHMGLVVAAVIIQSPWGLSGAMALMIAHGFTSSALFCLANTTYERTHTRILILTRGFHNILPMATTWWLLTNLMNIATPPTMNFTSELLIVSTLFNWCPTTIIMLGLSMLITTTYSLHMFLSTQMGSPMLNYQTEPSHSREHLLMILHIIPLLMISMKPELVI</sequence>
<name>NU4M_HYPHY</name>
<reference key="1">
    <citation type="journal article" date="1996" name="Copeia">
        <title>Crotaline intergeneric relationships based on mitochondrial DNA sequence data.</title>
        <authorList>
            <person name="Kraus F."/>
            <person name="Mink D.G."/>
            <person name="Brown W.M."/>
        </authorList>
    </citation>
    <scope>NUCLEOTIDE SEQUENCE [GENOMIC DNA]</scope>
</reference>
<proteinExistence type="inferred from homology"/>
<keyword id="KW-0249">Electron transport</keyword>
<keyword id="KW-0472">Membrane</keyword>
<keyword id="KW-0496">Mitochondrion</keyword>
<keyword id="KW-0520">NAD</keyword>
<keyword id="KW-0679">Respiratory chain</keyword>
<keyword id="KW-1278">Translocase</keyword>
<keyword id="KW-0812">Transmembrane</keyword>
<keyword id="KW-1133">Transmembrane helix</keyword>
<keyword id="KW-0813">Transport</keyword>
<keyword id="KW-0830">Ubiquinone</keyword>
<geneLocation type="mitochondrion"/>
<evidence type="ECO:0000250" key="1"/>
<evidence type="ECO:0000255" key="2"/>
<evidence type="ECO:0000305" key="3"/>
<comment type="function">
    <text evidence="1">Core subunit of the mitochondrial membrane respiratory chain NADH dehydrogenase (Complex I) that is believed to belong to the minimal assembly required for catalysis. Complex I functions in the transfer of electrons from NADH to the respiratory chain. The immediate electron acceptor for the enzyme is believed to be ubiquinone (By similarity).</text>
</comment>
<comment type="catalytic activity">
    <reaction>
        <text>a ubiquinone + NADH + 5 H(+)(in) = a ubiquinol + NAD(+) + 4 H(+)(out)</text>
        <dbReference type="Rhea" id="RHEA:29091"/>
        <dbReference type="Rhea" id="RHEA-COMP:9565"/>
        <dbReference type="Rhea" id="RHEA-COMP:9566"/>
        <dbReference type="ChEBI" id="CHEBI:15378"/>
        <dbReference type="ChEBI" id="CHEBI:16389"/>
        <dbReference type="ChEBI" id="CHEBI:17976"/>
        <dbReference type="ChEBI" id="CHEBI:57540"/>
        <dbReference type="ChEBI" id="CHEBI:57945"/>
        <dbReference type="EC" id="7.1.1.2"/>
    </reaction>
</comment>
<comment type="subcellular location">
    <subcellularLocation>
        <location evidence="1">Mitochondrion membrane</location>
        <topology evidence="1">Multi-pass membrane protein</topology>
    </subcellularLocation>
</comment>
<comment type="similarity">
    <text evidence="3">Belongs to the complex I subunit 4 family.</text>
</comment>
<dbReference type="EC" id="7.1.1.2"/>
<dbReference type="EMBL" id="U41884">
    <property type="protein sequence ID" value="AAB46644.1"/>
    <property type="molecule type" value="Genomic_DNA"/>
</dbReference>
<dbReference type="SMR" id="O03733"/>
<dbReference type="GO" id="GO:0031966">
    <property type="term" value="C:mitochondrial membrane"/>
    <property type="evidence" value="ECO:0007669"/>
    <property type="project" value="UniProtKB-SubCell"/>
</dbReference>
<dbReference type="GO" id="GO:0008137">
    <property type="term" value="F:NADH dehydrogenase (ubiquinone) activity"/>
    <property type="evidence" value="ECO:0007669"/>
    <property type="project" value="UniProtKB-EC"/>
</dbReference>
<dbReference type="GO" id="GO:0048039">
    <property type="term" value="F:ubiquinone binding"/>
    <property type="evidence" value="ECO:0007669"/>
    <property type="project" value="TreeGrafter"/>
</dbReference>
<dbReference type="GO" id="GO:0042773">
    <property type="term" value="P:ATP synthesis coupled electron transport"/>
    <property type="evidence" value="ECO:0007669"/>
    <property type="project" value="InterPro"/>
</dbReference>
<dbReference type="GO" id="GO:0015990">
    <property type="term" value="P:electron transport coupled proton transport"/>
    <property type="evidence" value="ECO:0007669"/>
    <property type="project" value="TreeGrafter"/>
</dbReference>
<dbReference type="InterPro" id="IPR003918">
    <property type="entry name" value="NADH_UbQ_OxRdtase"/>
</dbReference>
<dbReference type="InterPro" id="IPR001750">
    <property type="entry name" value="ND/Mrp_TM"/>
</dbReference>
<dbReference type="PANTHER" id="PTHR43507">
    <property type="entry name" value="NADH-UBIQUINONE OXIDOREDUCTASE CHAIN 4"/>
    <property type="match status" value="1"/>
</dbReference>
<dbReference type="PANTHER" id="PTHR43507:SF20">
    <property type="entry name" value="NADH-UBIQUINONE OXIDOREDUCTASE CHAIN 4"/>
    <property type="match status" value="1"/>
</dbReference>
<dbReference type="Pfam" id="PF00361">
    <property type="entry name" value="Proton_antipo_M"/>
    <property type="match status" value="1"/>
</dbReference>
<protein>
    <recommendedName>
        <fullName>NADH-ubiquinone oxidoreductase chain 4</fullName>
        <ecNumber>7.1.1.2</ecNumber>
    </recommendedName>
    <alternativeName>
        <fullName>NADH dehydrogenase subunit 4</fullName>
    </alternativeName>
</protein>
<accession>O03733</accession>